<reference key="1">
    <citation type="journal article" date="2002" name="Nature">
        <title>The genome sequence of Schizosaccharomyces pombe.</title>
        <authorList>
            <person name="Wood V."/>
            <person name="Gwilliam R."/>
            <person name="Rajandream M.A."/>
            <person name="Lyne M.H."/>
            <person name="Lyne R."/>
            <person name="Stewart A."/>
            <person name="Sgouros J.G."/>
            <person name="Peat N."/>
            <person name="Hayles J."/>
            <person name="Baker S.G."/>
            <person name="Basham D."/>
            <person name="Bowman S."/>
            <person name="Brooks K."/>
            <person name="Brown D."/>
            <person name="Brown S."/>
            <person name="Chillingworth T."/>
            <person name="Churcher C.M."/>
            <person name="Collins M."/>
            <person name="Connor R."/>
            <person name="Cronin A."/>
            <person name="Davis P."/>
            <person name="Feltwell T."/>
            <person name="Fraser A."/>
            <person name="Gentles S."/>
            <person name="Goble A."/>
            <person name="Hamlin N."/>
            <person name="Harris D.E."/>
            <person name="Hidalgo J."/>
            <person name="Hodgson G."/>
            <person name="Holroyd S."/>
            <person name="Hornsby T."/>
            <person name="Howarth S."/>
            <person name="Huckle E.J."/>
            <person name="Hunt S."/>
            <person name="Jagels K."/>
            <person name="James K.D."/>
            <person name="Jones L."/>
            <person name="Jones M."/>
            <person name="Leather S."/>
            <person name="McDonald S."/>
            <person name="McLean J."/>
            <person name="Mooney P."/>
            <person name="Moule S."/>
            <person name="Mungall K.L."/>
            <person name="Murphy L.D."/>
            <person name="Niblett D."/>
            <person name="Odell C."/>
            <person name="Oliver K."/>
            <person name="O'Neil S."/>
            <person name="Pearson D."/>
            <person name="Quail M.A."/>
            <person name="Rabbinowitsch E."/>
            <person name="Rutherford K.M."/>
            <person name="Rutter S."/>
            <person name="Saunders D."/>
            <person name="Seeger K."/>
            <person name="Sharp S."/>
            <person name="Skelton J."/>
            <person name="Simmonds M.N."/>
            <person name="Squares R."/>
            <person name="Squares S."/>
            <person name="Stevens K."/>
            <person name="Taylor K."/>
            <person name="Taylor R.G."/>
            <person name="Tivey A."/>
            <person name="Walsh S.V."/>
            <person name="Warren T."/>
            <person name="Whitehead S."/>
            <person name="Woodward J.R."/>
            <person name="Volckaert G."/>
            <person name="Aert R."/>
            <person name="Robben J."/>
            <person name="Grymonprez B."/>
            <person name="Weltjens I."/>
            <person name="Vanstreels E."/>
            <person name="Rieger M."/>
            <person name="Schaefer M."/>
            <person name="Mueller-Auer S."/>
            <person name="Gabel C."/>
            <person name="Fuchs M."/>
            <person name="Duesterhoeft A."/>
            <person name="Fritzc C."/>
            <person name="Holzer E."/>
            <person name="Moestl D."/>
            <person name="Hilbert H."/>
            <person name="Borzym K."/>
            <person name="Langer I."/>
            <person name="Beck A."/>
            <person name="Lehrach H."/>
            <person name="Reinhardt R."/>
            <person name="Pohl T.M."/>
            <person name="Eger P."/>
            <person name="Zimmermann W."/>
            <person name="Wedler H."/>
            <person name="Wambutt R."/>
            <person name="Purnelle B."/>
            <person name="Goffeau A."/>
            <person name="Cadieu E."/>
            <person name="Dreano S."/>
            <person name="Gloux S."/>
            <person name="Lelaure V."/>
            <person name="Mottier S."/>
            <person name="Galibert F."/>
            <person name="Aves S.J."/>
            <person name="Xiang Z."/>
            <person name="Hunt C."/>
            <person name="Moore K."/>
            <person name="Hurst S.M."/>
            <person name="Lucas M."/>
            <person name="Rochet M."/>
            <person name="Gaillardin C."/>
            <person name="Tallada V.A."/>
            <person name="Garzon A."/>
            <person name="Thode G."/>
            <person name="Daga R.R."/>
            <person name="Cruzado L."/>
            <person name="Jimenez J."/>
            <person name="Sanchez M."/>
            <person name="del Rey F."/>
            <person name="Benito J."/>
            <person name="Dominguez A."/>
            <person name="Revuelta J.L."/>
            <person name="Moreno S."/>
            <person name="Armstrong J."/>
            <person name="Forsburg S.L."/>
            <person name="Cerutti L."/>
            <person name="Lowe T."/>
            <person name="McCombie W.R."/>
            <person name="Paulsen I."/>
            <person name="Potashkin J."/>
            <person name="Shpakovski G.V."/>
            <person name="Ussery D."/>
            <person name="Barrell B.G."/>
            <person name="Nurse P."/>
        </authorList>
    </citation>
    <scope>NUCLEOTIDE SEQUENCE [LARGE SCALE GENOMIC DNA]</scope>
    <source>
        <strain>972 / ATCC 24843</strain>
    </source>
</reference>
<organism>
    <name type="scientific">Schizosaccharomyces pombe (strain 972 / ATCC 24843)</name>
    <name type="common">Fission yeast</name>
    <dbReference type="NCBI Taxonomy" id="284812"/>
    <lineage>
        <taxon>Eukaryota</taxon>
        <taxon>Fungi</taxon>
        <taxon>Dikarya</taxon>
        <taxon>Ascomycota</taxon>
        <taxon>Taphrinomycotina</taxon>
        <taxon>Schizosaccharomycetes</taxon>
        <taxon>Schizosaccharomycetales</taxon>
        <taxon>Schizosaccharomycetaceae</taxon>
        <taxon>Schizosaccharomyces</taxon>
    </lineage>
</organism>
<name>YAC1_SCHPO</name>
<accession>Q09839</accession>
<dbReference type="EMBL" id="CU329670">
    <property type="protein sequence ID" value="CAA91215.3"/>
    <property type="molecule type" value="Genomic_DNA"/>
</dbReference>
<dbReference type="PIR" id="S62491">
    <property type="entry name" value="S62491"/>
</dbReference>
<dbReference type="RefSeq" id="NP_593074.2">
    <property type="nucleotide sequence ID" value="NM_001018472.2"/>
</dbReference>
<dbReference type="SMR" id="Q09839"/>
<dbReference type="BioGRID" id="278781">
    <property type="interactions" value="7"/>
</dbReference>
<dbReference type="FunCoup" id="Q09839">
    <property type="interactions" value="1"/>
</dbReference>
<dbReference type="STRING" id="284812.Q09839"/>
<dbReference type="PaxDb" id="4896-SPAC16C9.01c.1"/>
<dbReference type="EnsemblFungi" id="SPAC16C9.01c.1">
    <property type="protein sequence ID" value="SPAC16C9.01c.1:pep"/>
    <property type="gene ID" value="SPAC16C9.01c"/>
</dbReference>
<dbReference type="KEGG" id="spo:2542315"/>
<dbReference type="PomBase" id="SPAC16C9.01c"/>
<dbReference type="VEuPathDB" id="FungiDB:SPAC16C9.01c"/>
<dbReference type="eggNOG" id="ENOG502QTK3">
    <property type="taxonomic scope" value="Eukaryota"/>
</dbReference>
<dbReference type="HOGENOM" id="CLU_032834_0_0_1"/>
<dbReference type="InParanoid" id="Q09839"/>
<dbReference type="OMA" id="VIKSWNT"/>
<dbReference type="PhylomeDB" id="Q09839"/>
<dbReference type="PRO" id="PR:Q09839"/>
<dbReference type="Proteomes" id="UP000002485">
    <property type="component" value="Chromosome I"/>
</dbReference>
<dbReference type="GO" id="GO:0016773">
    <property type="term" value="F:phosphotransferase activity, alcohol group as acceptor"/>
    <property type="evidence" value="ECO:0000255"/>
    <property type="project" value="PomBase"/>
</dbReference>
<dbReference type="CDD" id="cd01943">
    <property type="entry name" value="MAK32"/>
    <property type="match status" value="1"/>
</dbReference>
<dbReference type="Gene3D" id="3.40.1190.20">
    <property type="match status" value="1"/>
</dbReference>
<dbReference type="InterPro" id="IPR034094">
    <property type="entry name" value="Mak32"/>
</dbReference>
<dbReference type="InterPro" id="IPR011611">
    <property type="entry name" value="PfkB_dom"/>
</dbReference>
<dbReference type="InterPro" id="IPR029056">
    <property type="entry name" value="Ribokinase-like"/>
</dbReference>
<dbReference type="PANTHER" id="PTHR47098">
    <property type="entry name" value="PROTEIN MAK32"/>
    <property type="match status" value="1"/>
</dbReference>
<dbReference type="PANTHER" id="PTHR47098:SF2">
    <property type="entry name" value="PROTEIN MAK32"/>
    <property type="match status" value="1"/>
</dbReference>
<dbReference type="Pfam" id="PF00294">
    <property type="entry name" value="PfkB"/>
    <property type="match status" value="1"/>
</dbReference>
<dbReference type="SUPFAM" id="SSF53613">
    <property type="entry name" value="Ribokinase-like"/>
    <property type="match status" value="1"/>
</dbReference>
<sequence>MDYPSKDVEFVTTGMFIIDEIEFDGGKKIKDIIGGAGSFALIGARLWTSEPESQQLGMIVDKGSDFPQVILDELNDLHTGIVYRETPWRKTTYGYNRLRDNGFRLFEYLTPKKPIRAPDLLETGLIYAKTIHIITNPKTFVSVCEELAKYGNLKNRPKIVWEPTPESCLPENWHILQKALKYCDIFSPNEVDSANLLGIDISESKSRAKEFVSAFQEFQIGHDSQGWVVLRNGSDGCLIGACTSSTNATSDAVVPVREILHLPSVQMKNGSVLDTTGAGNAFCGAAILEYYRTGNIIEACAKATVAASFVIQQHGLPAHTKNSEGIDLWNGESVFQRLKEYYEFLASHEASAIKELTKRGV</sequence>
<gene>
    <name type="ORF">SPAC16C9.01c</name>
    <name type="ORF">SPAC4G8.14c</name>
</gene>
<feature type="chain" id="PRO_0000116413" description="Uncharacterized protein C16C9.01c">
    <location>
        <begin position="1"/>
        <end position="361"/>
    </location>
</feature>
<proteinExistence type="predicted"/>
<protein>
    <recommendedName>
        <fullName>Uncharacterized protein C16C9.01c</fullName>
    </recommendedName>
</protein>
<keyword id="KW-1185">Reference proteome</keyword>